<accession>A3MYN7</accession>
<sequence length="193" mass="20718">MVDYILLIISTALINNFVLVKFLGLCPFMGVSKKVETAIGMGMATTFVLTVASLSAYLVETYVLIPLEAQFLRTLVFILVIAVIVQLTEMIVHKTSPTLYRLLGIYLPLITTNCAVLGVALLNVNLSNNLVESVLYGFGAALGFSLVLVLFAALRERLAAADVPRPFQGASIALITAGLMSLAFMGFTGLVKI</sequence>
<feature type="chain" id="PRO_1000013518" description="Ion-translocating oxidoreductase complex subunit A">
    <location>
        <begin position="1"/>
        <end position="193"/>
    </location>
</feature>
<feature type="transmembrane region" description="Helical" evidence="1">
    <location>
        <begin position="5"/>
        <end position="25"/>
    </location>
</feature>
<feature type="transmembrane region" description="Helical" evidence="1">
    <location>
        <begin position="39"/>
        <end position="59"/>
    </location>
</feature>
<feature type="transmembrane region" description="Helical" evidence="1">
    <location>
        <begin position="65"/>
        <end position="85"/>
    </location>
</feature>
<feature type="transmembrane region" description="Helical" evidence="1">
    <location>
        <begin position="102"/>
        <end position="122"/>
    </location>
</feature>
<feature type="transmembrane region" description="Helical" evidence="1">
    <location>
        <begin position="134"/>
        <end position="154"/>
    </location>
</feature>
<feature type="transmembrane region" description="Helical" evidence="1">
    <location>
        <begin position="171"/>
        <end position="191"/>
    </location>
</feature>
<gene>
    <name evidence="1" type="primary">rnfA</name>
    <name type="ordered locus">APL_0165</name>
</gene>
<keyword id="KW-0997">Cell inner membrane</keyword>
<keyword id="KW-1003">Cell membrane</keyword>
<keyword id="KW-0249">Electron transport</keyword>
<keyword id="KW-0472">Membrane</keyword>
<keyword id="KW-1185">Reference proteome</keyword>
<keyword id="KW-1278">Translocase</keyword>
<keyword id="KW-0812">Transmembrane</keyword>
<keyword id="KW-1133">Transmembrane helix</keyword>
<keyword id="KW-0813">Transport</keyword>
<organism>
    <name type="scientific">Actinobacillus pleuropneumoniae serotype 5b (strain L20)</name>
    <dbReference type="NCBI Taxonomy" id="416269"/>
    <lineage>
        <taxon>Bacteria</taxon>
        <taxon>Pseudomonadati</taxon>
        <taxon>Pseudomonadota</taxon>
        <taxon>Gammaproteobacteria</taxon>
        <taxon>Pasteurellales</taxon>
        <taxon>Pasteurellaceae</taxon>
        <taxon>Actinobacillus</taxon>
    </lineage>
</organism>
<comment type="function">
    <text evidence="1">Part of a membrane-bound complex that couples electron transfer with translocation of ions across the membrane.</text>
</comment>
<comment type="subunit">
    <text evidence="1">The complex is composed of six subunits: RnfA, RnfB, RnfC, RnfD, RnfE and RnfG.</text>
</comment>
<comment type="subcellular location">
    <subcellularLocation>
        <location evidence="1">Cell inner membrane</location>
        <topology evidence="1">Multi-pass membrane protein</topology>
    </subcellularLocation>
</comment>
<comment type="similarity">
    <text evidence="1">Belongs to the NqrDE/RnfAE family.</text>
</comment>
<proteinExistence type="inferred from homology"/>
<evidence type="ECO:0000255" key="1">
    <source>
        <dbReference type="HAMAP-Rule" id="MF_00459"/>
    </source>
</evidence>
<name>RNFA_ACTP2</name>
<dbReference type="EC" id="7.-.-.-" evidence="1"/>
<dbReference type="EMBL" id="CP000569">
    <property type="protein sequence ID" value="ABN73273.1"/>
    <property type="molecule type" value="Genomic_DNA"/>
</dbReference>
<dbReference type="SMR" id="A3MYN7"/>
<dbReference type="STRING" id="416269.APL_0165"/>
<dbReference type="EnsemblBacteria" id="ABN73273">
    <property type="protein sequence ID" value="ABN73273"/>
    <property type="gene ID" value="APL_0165"/>
</dbReference>
<dbReference type="KEGG" id="apl:APL_0165"/>
<dbReference type="eggNOG" id="COG4657">
    <property type="taxonomic scope" value="Bacteria"/>
</dbReference>
<dbReference type="HOGENOM" id="CLU_095255_1_0_6"/>
<dbReference type="Proteomes" id="UP000001432">
    <property type="component" value="Chromosome"/>
</dbReference>
<dbReference type="GO" id="GO:0005886">
    <property type="term" value="C:plasma membrane"/>
    <property type="evidence" value="ECO:0007669"/>
    <property type="project" value="UniProtKB-SubCell"/>
</dbReference>
<dbReference type="GO" id="GO:0022900">
    <property type="term" value="P:electron transport chain"/>
    <property type="evidence" value="ECO:0007669"/>
    <property type="project" value="UniProtKB-UniRule"/>
</dbReference>
<dbReference type="HAMAP" id="MF_00459">
    <property type="entry name" value="RsxA_RnfA"/>
    <property type="match status" value="1"/>
</dbReference>
<dbReference type="InterPro" id="IPR011293">
    <property type="entry name" value="Ion_transpt_RnfA/RsxA"/>
</dbReference>
<dbReference type="InterPro" id="IPR003667">
    <property type="entry name" value="NqrDE/RnfAE"/>
</dbReference>
<dbReference type="InterPro" id="IPR050133">
    <property type="entry name" value="NqrDE/RnfAE_oxidrdctase"/>
</dbReference>
<dbReference type="NCBIfam" id="NF003481">
    <property type="entry name" value="PRK05151.1"/>
    <property type="match status" value="1"/>
</dbReference>
<dbReference type="NCBIfam" id="TIGR01943">
    <property type="entry name" value="rnfA"/>
    <property type="match status" value="1"/>
</dbReference>
<dbReference type="PANTHER" id="PTHR30335">
    <property type="entry name" value="INTEGRAL MEMBRANE PROTEIN OF SOXR-REDUCING COMPLEX"/>
    <property type="match status" value="1"/>
</dbReference>
<dbReference type="PANTHER" id="PTHR30335:SF0">
    <property type="entry name" value="ION-TRANSLOCATING OXIDOREDUCTASE COMPLEX SUBUNIT A"/>
    <property type="match status" value="1"/>
</dbReference>
<dbReference type="Pfam" id="PF02508">
    <property type="entry name" value="Rnf-Nqr"/>
    <property type="match status" value="1"/>
</dbReference>
<dbReference type="PIRSF" id="PIRSF006102">
    <property type="entry name" value="NQR_DE"/>
    <property type="match status" value="1"/>
</dbReference>
<protein>
    <recommendedName>
        <fullName evidence="1">Ion-translocating oxidoreductase complex subunit A</fullName>
        <ecNumber evidence="1">7.-.-.-</ecNumber>
    </recommendedName>
    <alternativeName>
        <fullName evidence="1">Rnf electron transport complex subunit A</fullName>
    </alternativeName>
</protein>
<reference key="1">
    <citation type="journal article" date="2008" name="J. Bacteriol.">
        <title>The complete genome sequence of Actinobacillus pleuropneumoniae L20 (serotype 5b).</title>
        <authorList>
            <person name="Foote S.J."/>
            <person name="Bosse J.T."/>
            <person name="Bouevitch A.B."/>
            <person name="Langford P.R."/>
            <person name="Young N.M."/>
            <person name="Nash J.H.E."/>
        </authorList>
    </citation>
    <scope>NUCLEOTIDE SEQUENCE [LARGE SCALE GENOMIC DNA]</scope>
    <source>
        <strain>L20</strain>
    </source>
</reference>